<comment type="catalytic activity">
    <reaction evidence="1">
        <text>L-glutamine + H2O = L-glutamate + NH4(+)</text>
        <dbReference type="Rhea" id="RHEA:15889"/>
        <dbReference type="ChEBI" id="CHEBI:15377"/>
        <dbReference type="ChEBI" id="CHEBI:28938"/>
        <dbReference type="ChEBI" id="CHEBI:29985"/>
        <dbReference type="ChEBI" id="CHEBI:58359"/>
        <dbReference type="EC" id="3.5.1.2"/>
    </reaction>
</comment>
<comment type="subunit">
    <text evidence="1">Homotetramer.</text>
</comment>
<comment type="similarity">
    <text evidence="1">Belongs to the glutaminase family.</text>
</comment>
<name>GLSA_RHIE6</name>
<reference key="1">
    <citation type="journal article" date="2010" name="Appl. Environ. Microbiol.">
        <title>Conserved symbiotic plasmid DNA sequences in the multireplicon pangenomic structure of Rhizobium etli.</title>
        <authorList>
            <person name="Gonzalez V."/>
            <person name="Acosta J.L."/>
            <person name="Santamaria R.I."/>
            <person name="Bustos P."/>
            <person name="Fernandez J.L."/>
            <person name="Hernandez Gonzalez I.L."/>
            <person name="Diaz R."/>
            <person name="Flores M."/>
            <person name="Palacios R."/>
            <person name="Mora J."/>
            <person name="Davila G."/>
        </authorList>
    </citation>
    <scope>NUCLEOTIDE SEQUENCE [LARGE SCALE GENOMIC DNA]</scope>
    <source>
        <strain>CIAT 652</strain>
    </source>
</reference>
<sequence>MADLKAILDSIYTDILPRVGEGKVADYIPELAKVDPRQFGMAIVTVDGKVYRVGDADIAFSIQSISKVFMLTLALGKVGEGLWKRVGREPSGSAFNSIVQLEHESGIPRNPFINAGAIAVTDVVMAGHAPREAIGELLRFVRYLADDESITIDDKVARSETQTGYRNVALANFMRAYRNLDHPVDHVLGVYFHQCALSMSCEQLARAGLFLAARGSNPMTGHSVVSPKRARRINALMLTCGHYDGSGDFAYHVGLPGKSGVGGGIFAVAPGIASIAVWSPGLNKVGNSQLGAVALEMLAARTGWSVFGD</sequence>
<protein>
    <recommendedName>
        <fullName evidence="1">Glutaminase</fullName>
        <ecNumber evidence="1">3.5.1.2</ecNumber>
    </recommendedName>
</protein>
<gene>
    <name evidence="1" type="primary">glsA</name>
    <name type="ordered locus">RHECIAT_CH0002407</name>
</gene>
<evidence type="ECO:0000255" key="1">
    <source>
        <dbReference type="HAMAP-Rule" id="MF_00313"/>
    </source>
</evidence>
<accession>B3PPT2</accession>
<feature type="chain" id="PRO_1000115701" description="Glutaminase">
    <location>
        <begin position="1"/>
        <end position="309"/>
    </location>
</feature>
<feature type="binding site" evidence="1">
    <location>
        <position position="64"/>
    </location>
    <ligand>
        <name>substrate</name>
    </ligand>
</feature>
<feature type="binding site" evidence="1">
    <location>
        <position position="114"/>
    </location>
    <ligand>
        <name>substrate</name>
    </ligand>
</feature>
<feature type="binding site" evidence="1">
    <location>
        <position position="160"/>
    </location>
    <ligand>
        <name>substrate</name>
    </ligand>
</feature>
<feature type="binding site" evidence="1">
    <location>
        <position position="167"/>
    </location>
    <ligand>
        <name>substrate</name>
    </ligand>
</feature>
<feature type="binding site" evidence="1">
    <location>
        <position position="191"/>
    </location>
    <ligand>
        <name>substrate</name>
    </ligand>
</feature>
<feature type="binding site" evidence="1">
    <location>
        <position position="243"/>
    </location>
    <ligand>
        <name>substrate</name>
    </ligand>
</feature>
<feature type="binding site" evidence="1">
    <location>
        <position position="261"/>
    </location>
    <ligand>
        <name>substrate</name>
    </ligand>
</feature>
<keyword id="KW-0378">Hydrolase</keyword>
<dbReference type="EC" id="3.5.1.2" evidence="1"/>
<dbReference type="EMBL" id="CP001074">
    <property type="protein sequence ID" value="ACE91361.1"/>
    <property type="molecule type" value="Genomic_DNA"/>
</dbReference>
<dbReference type="SMR" id="B3PPT2"/>
<dbReference type="KEGG" id="rec:RHECIAT_CH0002407"/>
<dbReference type="eggNOG" id="COG2066">
    <property type="taxonomic scope" value="Bacteria"/>
</dbReference>
<dbReference type="HOGENOM" id="CLU_027932_1_1_5"/>
<dbReference type="Proteomes" id="UP000008817">
    <property type="component" value="Chromosome"/>
</dbReference>
<dbReference type="GO" id="GO:0004359">
    <property type="term" value="F:glutaminase activity"/>
    <property type="evidence" value="ECO:0007669"/>
    <property type="project" value="UniProtKB-UniRule"/>
</dbReference>
<dbReference type="GO" id="GO:0006537">
    <property type="term" value="P:glutamate biosynthetic process"/>
    <property type="evidence" value="ECO:0007669"/>
    <property type="project" value="TreeGrafter"/>
</dbReference>
<dbReference type="GO" id="GO:0006543">
    <property type="term" value="P:glutamine catabolic process"/>
    <property type="evidence" value="ECO:0007669"/>
    <property type="project" value="TreeGrafter"/>
</dbReference>
<dbReference type="FunFam" id="3.40.710.10:FF:000005">
    <property type="entry name" value="Glutaminase"/>
    <property type="match status" value="1"/>
</dbReference>
<dbReference type="Gene3D" id="3.40.710.10">
    <property type="entry name" value="DD-peptidase/beta-lactamase superfamily"/>
    <property type="match status" value="1"/>
</dbReference>
<dbReference type="HAMAP" id="MF_00313">
    <property type="entry name" value="Glutaminase"/>
    <property type="match status" value="1"/>
</dbReference>
<dbReference type="InterPro" id="IPR012338">
    <property type="entry name" value="Beta-lactam/transpept-like"/>
</dbReference>
<dbReference type="InterPro" id="IPR015868">
    <property type="entry name" value="Glutaminase"/>
</dbReference>
<dbReference type="NCBIfam" id="TIGR03814">
    <property type="entry name" value="Gln_ase"/>
    <property type="match status" value="1"/>
</dbReference>
<dbReference type="NCBIfam" id="NF002132">
    <property type="entry name" value="PRK00971.1-1"/>
    <property type="match status" value="1"/>
</dbReference>
<dbReference type="NCBIfam" id="NF002133">
    <property type="entry name" value="PRK00971.1-2"/>
    <property type="match status" value="1"/>
</dbReference>
<dbReference type="PANTHER" id="PTHR12544">
    <property type="entry name" value="GLUTAMINASE"/>
    <property type="match status" value="1"/>
</dbReference>
<dbReference type="PANTHER" id="PTHR12544:SF29">
    <property type="entry name" value="GLUTAMINASE"/>
    <property type="match status" value="1"/>
</dbReference>
<dbReference type="Pfam" id="PF04960">
    <property type="entry name" value="Glutaminase"/>
    <property type="match status" value="1"/>
</dbReference>
<dbReference type="SUPFAM" id="SSF56601">
    <property type="entry name" value="beta-lactamase/transpeptidase-like"/>
    <property type="match status" value="1"/>
</dbReference>
<organism>
    <name type="scientific">Rhizobium etli (strain CIAT 652)</name>
    <dbReference type="NCBI Taxonomy" id="491916"/>
    <lineage>
        <taxon>Bacteria</taxon>
        <taxon>Pseudomonadati</taxon>
        <taxon>Pseudomonadota</taxon>
        <taxon>Alphaproteobacteria</taxon>
        <taxon>Hyphomicrobiales</taxon>
        <taxon>Rhizobiaceae</taxon>
        <taxon>Rhizobium/Agrobacterium group</taxon>
        <taxon>Rhizobium</taxon>
    </lineage>
</organism>
<proteinExistence type="inferred from homology"/>